<feature type="signal peptide" evidence="1">
    <location>
        <begin position="1"/>
        <end position="20"/>
    </location>
</feature>
<feature type="chain" id="PRO_0000360417" description="Putative spore germination protein YfkR">
    <location>
        <begin position="21"/>
        <end position="384"/>
    </location>
</feature>
<feature type="lipid moiety-binding region" description="N-palmitoyl cysteine" evidence="1">
    <location>
        <position position="21"/>
    </location>
</feature>
<feature type="lipid moiety-binding region" description="S-diacylglycerol cysteine" evidence="1">
    <location>
        <position position="21"/>
    </location>
</feature>
<accession>O35028</accession>
<accession>Q79EU3</accession>
<reference key="1">
    <citation type="journal article" date="1997" name="Gene">
        <title>Cloning and sequencing of a 35.7 kb in the 70 degree-73 degree region of the Bacillus subtilis genome reveal genes for a new two-component system, three spore germination proteins, an iron uptake system and a general stress response protein.</title>
        <authorList>
            <person name="Yamamoto H."/>
            <person name="Uchiyama S."/>
            <person name="Nugroho F.A."/>
            <person name="Sekiguchi J."/>
        </authorList>
    </citation>
    <scope>NUCLEOTIDE SEQUENCE [GENOMIC DNA]</scope>
    <source>
        <strain>168 / AC327</strain>
    </source>
</reference>
<reference key="2">
    <citation type="journal article" date="1997" name="Nature">
        <title>The complete genome sequence of the Gram-positive bacterium Bacillus subtilis.</title>
        <authorList>
            <person name="Kunst F."/>
            <person name="Ogasawara N."/>
            <person name="Moszer I."/>
            <person name="Albertini A.M."/>
            <person name="Alloni G."/>
            <person name="Azevedo V."/>
            <person name="Bertero M.G."/>
            <person name="Bessieres P."/>
            <person name="Bolotin A."/>
            <person name="Borchert S."/>
            <person name="Borriss R."/>
            <person name="Boursier L."/>
            <person name="Brans A."/>
            <person name="Braun M."/>
            <person name="Brignell S.C."/>
            <person name="Bron S."/>
            <person name="Brouillet S."/>
            <person name="Bruschi C.V."/>
            <person name="Caldwell B."/>
            <person name="Capuano V."/>
            <person name="Carter N.M."/>
            <person name="Choi S.-K."/>
            <person name="Codani J.-J."/>
            <person name="Connerton I.F."/>
            <person name="Cummings N.J."/>
            <person name="Daniel R.A."/>
            <person name="Denizot F."/>
            <person name="Devine K.M."/>
            <person name="Duesterhoeft A."/>
            <person name="Ehrlich S.D."/>
            <person name="Emmerson P.T."/>
            <person name="Entian K.-D."/>
            <person name="Errington J."/>
            <person name="Fabret C."/>
            <person name="Ferrari E."/>
            <person name="Foulger D."/>
            <person name="Fritz C."/>
            <person name="Fujita M."/>
            <person name="Fujita Y."/>
            <person name="Fuma S."/>
            <person name="Galizzi A."/>
            <person name="Galleron N."/>
            <person name="Ghim S.-Y."/>
            <person name="Glaser P."/>
            <person name="Goffeau A."/>
            <person name="Golightly E.J."/>
            <person name="Grandi G."/>
            <person name="Guiseppi G."/>
            <person name="Guy B.J."/>
            <person name="Haga K."/>
            <person name="Haiech J."/>
            <person name="Harwood C.R."/>
            <person name="Henaut A."/>
            <person name="Hilbert H."/>
            <person name="Holsappel S."/>
            <person name="Hosono S."/>
            <person name="Hullo M.-F."/>
            <person name="Itaya M."/>
            <person name="Jones L.-M."/>
            <person name="Joris B."/>
            <person name="Karamata D."/>
            <person name="Kasahara Y."/>
            <person name="Klaerr-Blanchard M."/>
            <person name="Klein C."/>
            <person name="Kobayashi Y."/>
            <person name="Koetter P."/>
            <person name="Koningstein G."/>
            <person name="Krogh S."/>
            <person name="Kumano M."/>
            <person name="Kurita K."/>
            <person name="Lapidus A."/>
            <person name="Lardinois S."/>
            <person name="Lauber J."/>
            <person name="Lazarevic V."/>
            <person name="Lee S.-M."/>
            <person name="Levine A."/>
            <person name="Liu H."/>
            <person name="Masuda S."/>
            <person name="Mauel C."/>
            <person name="Medigue C."/>
            <person name="Medina N."/>
            <person name="Mellado R.P."/>
            <person name="Mizuno M."/>
            <person name="Moestl D."/>
            <person name="Nakai S."/>
            <person name="Noback M."/>
            <person name="Noone D."/>
            <person name="O'Reilly M."/>
            <person name="Ogawa K."/>
            <person name="Ogiwara A."/>
            <person name="Oudega B."/>
            <person name="Park S.-H."/>
            <person name="Parro V."/>
            <person name="Pohl T.M."/>
            <person name="Portetelle D."/>
            <person name="Porwollik S."/>
            <person name="Prescott A.M."/>
            <person name="Presecan E."/>
            <person name="Pujic P."/>
            <person name="Purnelle B."/>
            <person name="Rapoport G."/>
            <person name="Rey M."/>
            <person name="Reynolds S."/>
            <person name="Rieger M."/>
            <person name="Rivolta C."/>
            <person name="Rocha E."/>
            <person name="Roche B."/>
            <person name="Rose M."/>
            <person name="Sadaie Y."/>
            <person name="Sato T."/>
            <person name="Scanlan E."/>
            <person name="Schleich S."/>
            <person name="Schroeter R."/>
            <person name="Scoffone F."/>
            <person name="Sekiguchi J."/>
            <person name="Sekowska A."/>
            <person name="Seror S.J."/>
            <person name="Serror P."/>
            <person name="Shin B.-S."/>
            <person name="Soldo B."/>
            <person name="Sorokin A."/>
            <person name="Tacconi E."/>
            <person name="Takagi T."/>
            <person name="Takahashi H."/>
            <person name="Takemaru K."/>
            <person name="Takeuchi M."/>
            <person name="Tamakoshi A."/>
            <person name="Tanaka T."/>
            <person name="Terpstra P."/>
            <person name="Tognoni A."/>
            <person name="Tosato V."/>
            <person name="Uchiyama S."/>
            <person name="Vandenbol M."/>
            <person name="Vannier F."/>
            <person name="Vassarotti A."/>
            <person name="Viari A."/>
            <person name="Wambutt R."/>
            <person name="Wedler E."/>
            <person name="Wedler H."/>
            <person name="Weitzenegger T."/>
            <person name="Winters P."/>
            <person name="Wipat A."/>
            <person name="Yamamoto H."/>
            <person name="Yamane K."/>
            <person name="Yasumoto K."/>
            <person name="Yata K."/>
            <person name="Yoshida K."/>
            <person name="Yoshikawa H.-F."/>
            <person name="Zumstein E."/>
            <person name="Yoshikawa H."/>
            <person name="Danchin A."/>
        </authorList>
    </citation>
    <scope>NUCLEOTIDE SEQUENCE [LARGE SCALE GENOMIC DNA]</scope>
    <source>
        <strain>168</strain>
    </source>
</reference>
<reference key="3">
    <citation type="journal article" date="2000" name="J. Bacteriol.">
        <title>Role of ger proteins in nutrient and nonnutrient triggering of spore germination in Bacillus subtilis.</title>
        <authorList>
            <person name="Paidhungat M."/>
            <person name="Setlow P."/>
        </authorList>
    </citation>
    <scope>FUNCTION</scope>
</reference>
<keyword id="KW-1003">Cell membrane</keyword>
<keyword id="KW-0309">Germination</keyword>
<keyword id="KW-0449">Lipoprotein</keyword>
<keyword id="KW-0472">Membrane</keyword>
<keyword id="KW-0564">Palmitate</keyword>
<keyword id="KW-1185">Reference proteome</keyword>
<keyword id="KW-0732">Signal</keyword>
<dbReference type="EMBL" id="D86417">
    <property type="protein sequence ID" value="BAA22291.1"/>
    <property type="molecule type" value="Genomic_DNA"/>
</dbReference>
<dbReference type="EMBL" id="AL009126">
    <property type="protein sequence ID" value="CAB12607.1"/>
    <property type="molecule type" value="Genomic_DNA"/>
</dbReference>
<dbReference type="PIR" id="D69809">
    <property type="entry name" value="D69809"/>
</dbReference>
<dbReference type="RefSeq" id="NP_388659.1">
    <property type="nucleotide sequence ID" value="NC_000964.3"/>
</dbReference>
<dbReference type="RefSeq" id="WP_003243672.1">
    <property type="nucleotide sequence ID" value="NZ_OZ025638.1"/>
</dbReference>
<dbReference type="SMR" id="O35028"/>
<dbReference type="FunCoup" id="O35028">
    <property type="interactions" value="3"/>
</dbReference>
<dbReference type="STRING" id="224308.BSU07780"/>
<dbReference type="PaxDb" id="224308-BSU07780"/>
<dbReference type="EnsemblBacteria" id="CAB12607">
    <property type="protein sequence ID" value="CAB12607"/>
    <property type="gene ID" value="BSU_07780"/>
</dbReference>
<dbReference type="GeneID" id="936126"/>
<dbReference type="KEGG" id="bsu:BSU07780"/>
<dbReference type="PATRIC" id="fig|224308.179.peg.842"/>
<dbReference type="eggNOG" id="ENOG502Z9N7">
    <property type="taxonomic scope" value="Bacteria"/>
</dbReference>
<dbReference type="InParanoid" id="O35028"/>
<dbReference type="OrthoDB" id="9816067at2"/>
<dbReference type="PhylomeDB" id="O35028"/>
<dbReference type="BioCyc" id="BSUB:BSU07780-MONOMER"/>
<dbReference type="Proteomes" id="UP000001570">
    <property type="component" value="Chromosome"/>
</dbReference>
<dbReference type="GO" id="GO:0005886">
    <property type="term" value="C:plasma membrane"/>
    <property type="evidence" value="ECO:0007669"/>
    <property type="project" value="UniProtKB-SubCell"/>
</dbReference>
<dbReference type="GO" id="GO:0009847">
    <property type="term" value="P:spore germination"/>
    <property type="evidence" value="ECO:0007669"/>
    <property type="project" value="InterPro"/>
</dbReference>
<dbReference type="Gene3D" id="3.30.300.210">
    <property type="entry name" value="Nutrient germinant receptor protein C, domain 3"/>
    <property type="match status" value="1"/>
</dbReference>
<dbReference type="InterPro" id="IPR008844">
    <property type="entry name" value="Spore_GerAC-like"/>
</dbReference>
<dbReference type="InterPro" id="IPR046953">
    <property type="entry name" value="Spore_GerAC-like_C"/>
</dbReference>
<dbReference type="InterPro" id="IPR038501">
    <property type="entry name" value="Spore_GerAC_C_sf"/>
</dbReference>
<dbReference type="NCBIfam" id="TIGR02887">
    <property type="entry name" value="spore_ger_x_C"/>
    <property type="match status" value="1"/>
</dbReference>
<dbReference type="PANTHER" id="PTHR35789">
    <property type="entry name" value="SPORE GERMINATION PROTEIN B3"/>
    <property type="match status" value="1"/>
</dbReference>
<dbReference type="PANTHER" id="PTHR35789:SF1">
    <property type="entry name" value="SPORE GERMINATION PROTEIN B3"/>
    <property type="match status" value="1"/>
</dbReference>
<dbReference type="Pfam" id="PF05504">
    <property type="entry name" value="Spore_GerAC"/>
    <property type="match status" value="1"/>
</dbReference>
<dbReference type="Pfam" id="PF25198">
    <property type="entry name" value="Spore_GerAC_N"/>
    <property type="match status" value="1"/>
</dbReference>
<dbReference type="PROSITE" id="PS51257">
    <property type="entry name" value="PROKAR_LIPOPROTEIN"/>
    <property type="match status" value="1"/>
</dbReference>
<proteinExistence type="inferred from homology"/>
<comment type="function">
    <text evidence="2">May be involved in spore germination.</text>
</comment>
<comment type="subcellular location">
    <subcellularLocation>
        <location evidence="1">Cell membrane</location>
        <topology evidence="1">Lipid-anchor</topology>
    </subcellularLocation>
</comment>
<comment type="similarity">
    <text evidence="3">Belongs to the GerABKC lipoprotein family.</text>
</comment>
<organism>
    <name type="scientific">Bacillus subtilis (strain 168)</name>
    <dbReference type="NCBI Taxonomy" id="224308"/>
    <lineage>
        <taxon>Bacteria</taxon>
        <taxon>Bacillati</taxon>
        <taxon>Bacillota</taxon>
        <taxon>Bacilli</taxon>
        <taxon>Bacillales</taxon>
        <taxon>Bacillaceae</taxon>
        <taxon>Bacillus</taxon>
    </lineage>
</organism>
<evidence type="ECO:0000255" key="1">
    <source>
        <dbReference type="PROSITE-ProRule" id="PRU00303"/>
    </source>
</evidence>
<evidence type="ECO:0000269" key="2">
    <source>
    </source>
</evidence>
<evidence type="ECO:0000305" key="3"/>
<protein>
    <recommendedName>
        <fullName>Putative spore germination protein YfkR</fullName>
    </recommendedName>
</protein>
<sequence length="384" mass="42796">MKKTIYKCVLPLLICILLTGCWDRTEINDIAFVVSSAIDKKKDQYRVAMQIPLVGQLGGQTGGGGGTAGSKTWYVDSASGTTIREANNKLQTSLSRTINTSHRRTVIIGEDMARDGVAPVFDILTRNPQNRLTALILVSRGEARDILNTDVQLEQFPAEMIRELAIIATSRPVFLSRFMSDLVEIGSDPYAPVISASKTKPGGKGKSNLKIDGLAIFKKDRLMDIFKDEHMTAALMLLNQARQPEFIVDLPNQMGQASIQLQKSNASFHAAEKNGKLSMTIEIRAKGIIMENQSTYETRENDQYYIIQKALNRTIKKDVISTVHRLQKLKADPAGFQDRTIRSTATTKNLLKKEWEEVYKDMEVHVVPIVTIEQGGVLYKTISH</sequence>
<gene>
    <name type="primary">yfkR</name>
    <name type="ordered locus">BSU07780</name>
</gene>
<name>YFKR_BACSU</name>